<sequence>MGSLSIWHWLIVGAVVLLVFGGKGKISDIMGDVAKGIKSFKRGLSEDEEKAEAKPVGEPSLRSLDHQGAGDPLKTPDARKIG</sequence>
<organism>
    <name type="scientific">Methylocella silvestris (strain DSM 15510 / CIP 108128 / LMG 27833 / NCIMB 13906 / BL2)</name>
    <dbReference type="NCBI Taxonomy" id="395965"/>
    <lineage>
        <taxon>Bacteria</taxon>
        <taxon>Pseudomonadati</taxon>
        <taxon>Pseudomonadota</taxon>
        <taxon>Alphaproteobacteria</taxon>
        <taxon>Hyphomicrobiales</taxon>
        <taxon>Beijerinckiaceae</taxon>
        <taxon>Methylocella</taxon>
    </lineage>
</organism>
<evidence type="ECO:0000255" key="1">
    <source>
        <dbReference type="HAMAP-Rule" id="MF_00236"/>
    </source>
</evidence>
<evidence type="ECO:0000256" key="2">
    <source>
        <dbReference type="SAM" id="MobiDB-lite"/>
    </source>
</evidence>
<reference key="1">
    <citation type="journal article" date="2010" name="J. Bacteriol.">
        <title>Complete genome sequence of the aerobic facultative methanotroph Methylocella silvestris BL2.</title>
        <authorList>
            <person name="Chen Y."/>
            <person name="Crombie A."/>
            <person name="Rahman M.T."/>
            <person name="Dedysh S.N."/>
            <person name="Liesack W."/>
            <person name="Stott M.B."/>
            <person name="Alam M."/>
            <person name="Theisen A.R."/>
            <person name="Murrell J.C."/>
            <person name="Dunfield P.F."/>
        </authorList>
    </citation>
    <scope>NUCLEOTIDE SEQUENCE [LARGE SCALE GENOMIC DNA]</scope>
    <source>
        <strain>DSM 15510 / CIP 108128 / LMG 27833 / NCIMB 13906 / BL2</strain>
    </source>
</reference>
<proteinExistence type="inferred from homology"/>
<gene>
    <name evidence="1" type="primary">tatA</name>
    <name type="ordered locus">Msil_0589</name>
</gene>
<keyword id="KW-0997">Cell inner membrane</keyword>
<keyword id="KW-1003">Cell membrane</keyword>
<keyword id="KW-0472">Membrane</keyword>
<keyword id="KW-0653">Protein transport</keyword>
<keyword id="KW-1185">Reference proteome</keyword>
<keyword id="KW-0811">Translocation</keyword>
<keyword id="KW-0812">Transmembrane</keyword>
<keyword id="KW-1133">Transmembrane helix</keyword>
<keyword id="KW-0813">Transport</keyword>
<name>TATA_METSB</name>
<protein>
    <recommendedName>
        <fullName evidence="1">Sec-independent protein translocase protein TatA</fullName>
    </recommendedName>
</protein>
<dbReference type="EMBL" id="CP001280">
    <property type="protein sequence ID" value="ACK49561.1"/>
    <property type="molecule type" value="Genomic_DNA"/>
</dbReference>
<dbReference type="RefSeq" id="WP_012589631.1">
    <property type="nucleotide sequence ID" value="NC_011666.1"/>
</dbReference>
<dbReference type="SMR" id="B8ELH2"/>
<dbReference type="STRING" id="395965.Msil_0589"/>
<dbReference type="KEGG" id="msl:Msil_0589"/>
<dbReference type="eggNOG" id="COG1826">
    <property type="taxonomic scope" value="Bacteria"/>
</dbReference>
<dbReference type="HOGENOM" id="CLU_086034_5_0_5"/>
<dbReference type="OrthoDB" id="7161179at2"/>
<dbReference type="Proteomes" id="UP000002257">
    <property type="component" value="Chromosome"/>
</dbReference>
<dbReference type="GO" id="GO:0033281">
    <property type="term" value="C:TAT protein transport complex"/>
    <property type="evidence" value="ECO:0007669"/>
    <property type="project" value="UniProtKB-UniRule"/>
</dbReference>
<dbReference type="GO" id="GO:0008320">
    <property type="term" value="F:protein transmembrane transporter activity"/>
    <property type="evidence" value="ECO:0007669"/>
    <property type="project" value="UniProtKB-UniRule"/>
</dbReference>
<dbReference type="GO" id="GO:0043953">
    <property type="term" value="P:protein transport by the Tat complex"/>
    <property type="evidence" value="ECO:0007669"/>
    <property type="project" value="UniProtKB-UniRule"/>
</dbReference>
<dbReference type="Gene3D" id="1.20.5.3310">
    <property type="match status" value="1"/>
</dbReference>
<dbReference type="HAMAP" id="MF_00236">
    <property type="entry name" value="TatA_E"/>
    <property type="match status" value="1"/>
</dbReference>
<dbReference type="InterPro" id="IPR003369">
    <property type="entry name" value="TatA/B/E"/>
</dbReference>
<dbReference type="InterPro" id="IPR006312">
    <property type="entry name" value="TatA/E"/>
</dbReference>
<dbReference type="NCBIfam" id="NF001940">
    <property type="entry name" value="PRK00720.1"/>
    <property type="match status" value="1"/>
</dbReference>
<dbReference type="NCBIfam" id="TIGR01411">
    <property type="entry name" value="tatAE"/>
    <property type="match status" value="1"/>
</dbReference>
<dbReference type="PANTHER" id="PTHR42982">
    <property type="entry name" value="SEC-INDEPENDENT PROTEIN TRANSLOCASE PROTEIN TATA"/>
    <property type="match status" value="1"/>
</dbReference>
<dbReference type="PANTHER" id="PTHR42982:SF1">
    <property type="entry name" value="SEC-INDEPENDENT PROTEIN TRANSLOCASE PROTEIN TATA"/>
    <property type="match status" value="1"/>
</dbReference>
<dbReference type="Pfam" id="PF02416">
    <property type="entry name" value="TatA_B_E"/>
    <property type="match status" value="1"/>
</dbReference>
<comment type="function">
    <text evidence="1">Part of the twin-arginine translocation (Tat) system that transports large folded proteins containing a characteristic twin-arginine motif in their signal peptide across membranes. TatA could form the protein-conducting channel of the Tat system.</text>
</comment>
<comment type="subunit">
    <text evidence="1">The Tat system comprises two distinct complexes: a TatABC complex, containing multiple copies of TatA, TatB and TatC subunits, and a separate TatA complex, containing only TatA subunits. Substrates initially bind to the TatABC complex, which probably triggers association of the separate TatA complex to form the active translocon.</text>
</comment>
<comment type="subcellular location">
    <subcellularLocation>
        <location evidence="1">Cell inner membrane</location>
        <topology evidence="1">Single-pass membrane protein</topology>
    </subcellularLocation>
</comment>
<comment type="similarity">
    <text evidence="1">Belongs to the TatA/E family.</text>
</comment>
<accession>B8ELH2</accession>
<feature type="chain" id="PRO_1000197883" description="Sec-independent protein translocase protein TatA">
    <location>
        <begin position="1"/>
        <end position="82"/>
    </location>
</feature>
<feature type="transmembrane region" description="Helical" evidence="1">
    <location>
        <begin position="1"/>
        <end position="21"/>
    </location>
</feature>
<feature type="region of interest" description="Disordered" evidence="2">
    <location>
        <begin position="43"/>
        <end position="82"/>
    </location>
</feature>